<keyword id="KW-0687">Ribonucleoprotein</keyword>
<keyword id="KW-0689">Ribosomal protein</keyword>
<keyword id="KW-0694">RNA-binding</keyword>
<keyword id="KW-0699">rRNA-binding</keyword>
<comment type="function">
    <text evidence="1">One of the primary rRNA binding proteins, it binds directly to 16S rRNA where it helps nucleate assembly of the platform of the 30S subunit by binding and bridging several RNA helices of the 16S rRNA.</text>
</comment>
<comment type="function">
    <text evidence="1">Forms an intersubunit bridge (bridge B4) with the 23S rRNA of the 50S subunit in the ribosome.</text>
</comment>
<comment type="subunit">
    <text evidence="1">Part of the 30S ribosomal subunit. Forms a bridge to the 50S subunit in the 70S ribosome, contacting the 23S rRNA.</text>
</comment>
<comment type="similarity">
    <text evidence="1">Belongs to the universal ribosomal protein uS15 family.</text>
</comment>
<proteinExistence type="inferred from homology"/>
<evidence type="ECO:0000255" key="1">
    <source>
        <dbReference type="HAMAP-Rule" id="MF_01343"/>
    </source>
</evidence>
<evidence type="ECO:0000305" key="2"/>
<sequence length="89" mass="10631">MALTQERKNEIIAEYRVHDTDTGSPEVQIAVLTAEINSLNEHVRVHKKDHHSYRGLMKMVGHRRNLLTYLRKKDVQRYRELIKRLGLRR</sequence>
<accession>Q71ZZ2</accession>
<dbReference type="EMBL" id="AE017262">
    <property type="protein sequence ID" value="AAT04122.1"/>
    <property type="molecule type" value="Genomic_DNA"/>
</dbReference>
<dbReference type="RefSeq" id="WP_003719603.1">
    <property type="nucleotide sequence ID" value="NC_002973.6"/>
</dbReference>
<dbReference type="SMR" id="Q71ZZ2"/>
<dbReference type="GeneID" id="93239206"/>
<dbReference type="KEGG" id="lmf:LMOf2365_1347"/>
<dbReference type="HOGENOM" id="CLU_148518_0_0_9"/>
<dbReference type="GO" id="GO:0022627">
    <property type="term" value="C:cytosolic small ribosomal subunit"/>
    <property type="evidence" value="ECO:0007669"/>
    <property type="project" value="TreeGrafter"/>
</dbReference>
<dbReference type="GO" id="GO:0019843">
    <property type="term" value="F:rRNA binding"/>
    <property type="evidence" value="ECO:0007669"/>
    <property type="project" value="UniProtKB-UniRule"/>
</dbReference>
<dbReference type="GO" id="GO:0003735">
    <property type="term" value="F:structural constituent of ribosome"/>
    <property type="evidence" value="ECO:0007669"/>
    <property type="project" value="InterPro"/>
</dbReference>
<dbReference type="GO" id="GO:0006412">
    <property type="term" value="P:translation"/>
    <property type="evidence" value="ECO:0007669"/>
    <property type="project" value="UniProtKB-UniRule"/>
</dbReference>
<dbReference type="CDD" id="cd00353">
    <property type="entry name" value="Ribosomal_S15p_S13e"/>
    <property type="match status" value="1"/>
</dbReference>
<dbReference type="FunFam" id="1.10.287.10:FF:000002">
    <property type="entry name" value="30S ribosomal protein S15"/>
    <property type="match status" value="1"/>
</dbReference>
<dbReference type="Gene3D" id="6.10.250.3130">
    <property type="match status" value="1"/>
</dbReference>
<dbReference type="Gene3D" id="1.10.287.10">
    <property type="entry name" value="S15/NS1, RNA-binding"/>
    <property type="match status" value="1"/>
</dbReference>
<dbReference type="HAMAP" id="MF_01343_B">
    <property type="entry name" value="Ribosomal_uS15_B"/>
    <property type="match status" value="1"/>
</dbReference>
<dbReference type="InterPro" id="IPR000589">
    <property type="entry name" value="Ribosomal_uS15"/>
</dbReference>
<dbReference type="InterPro" id="IPR005290">
    <property type="entry name" value="Ribosomal_uS15_bac-type"/>
</dbReference>
<dbReference type="InterPro" id="IPR009068">
    <property type="entry name" value="uS15_NS1_RNA-bd_sf"/>
</dbReference>
<dbReference type="NCBIfam" id="TIGR00952">
    <property type="entry name" value="S15_bact"/>
    <property type="match status" value="1"/>
</dbReference>
<dbReference type="PANTHER" id="PTHR23321">
    <property type="entry name" value="RIBOSOMAL PROTEIN S15, BACTERIAL AND ORGANELLAR"/>
    <property type="match status" value="1"/>
</dbReference>
<dbReference type="PANTHER" id="PTHR23321:SF26">
    <property type="entry name" value="SMALL RIBOSOMAL SUBUNIT PROTEIN US15M"/>
    <property type="match status" value="1"/>
</dbReference>
<dbReference type="Pfam" id="PF00312">
    <property type="entry name" value="Ribosomal_S15"/>
    <property type="match status" value="1"/>
</dbReference>
<dbReference type="SMART" id="SM01387">
    <property type="entry name" value="Ribosomal_S15"/>
    <property type="match status" value="1"/>
</dbReference>
<dbReference type="SUPFAM" id="SSF47060">
    <property type="entry name" value="S15/NS1 RNA-binding domain"/>
    <property type="match status" value="1"/>
</dbReference>
<dbReference type="PROSITE" id="PS00362">
    <property type="entry name" value="RIBOSOMAL_S15"/>
    <property type="match status" value="1"/>
</dbReference>
<gene>
    <name evidence="1" type="primary">rpsO</name>
    <name type="ordered locus">LMOf2365_1347</name>
</gene>
<feature type="chain" id="PRO_0000115466" description="Small ribosomal subunit protein uS15">
    <location>
        <begin position="1"/>
        <end position="89"/>
    </location>
</feature>
<organism>
    <name type="scientific">Listeria monocytogenes serotype 4b (strain F2365)</name>
    <dbReference type="NCBI Taxonomy" id="265669"/>
    <lineage>
        <taxon>Bacteria</taxon>
        <taxon>Bacillati</taxon>
        <taxon>Bacillota</taxon>
        <taxon>Bacilli</taxon>
        <taxon>Bacillales</taxon>
        <taxon>Listeriaceae</taxon>
        <taxon>Listeria</taxon>
    </lineage>
</organism>
<name>RS15_LISMF</name>
<protein>
    <recommendedName>
        <fullName evidence="1">Small ribosomal subunit protein uS15</fullName>
    </recommendedName>
    <alternativeName>
        <fullName evidence="2">30S ribosomal protein S15</fullName>
    </alternativeName>
</protein>
<reference key="1">
    <citation type="journal article" date="2004" name="Nucleic Acids Res.">
        <title>Whole genome comparisons of serotype 4b and 1/2a strains of the food-borne pathogen Listeria monocytogenes reveal new insights into the core genome components of this species.</title>
        <authorList>
            <person name="Nelson K.E."/>
            <person name="Fouts D.E."/>
            <person name="Mongodin E.F."/>
            <person name="Ravel J."/>
            <person name="DeBoy R.T."/>
            <person name="Kolonay J.F."/>
            <person name="Rasko D.A."/>
            <person name="Angiuoli S.V."/>
            <person name="Gill S.R."/>
            <person name="Paulsen I.T."/>
            <person name="Peterson J.D."/>
            <person name="White O."/>
            <person name="Nelson W.C."/>
            <person name="Nierman W.C."/>
            <person name="Beanan M.J."/>
            <person name="Brinkac L.M."/>
            <person name="Daugherty S.C."/>
            <person name="Dodson R.J."/>
            <person name="Durkin A.S."/>
            <person name="Madupu R."/>
            <person name="Haft D.H."/>
            <person name="Selengut J."/>
            <person name="Van Aken S.E."/>
            <person name="Khouri H.M."/>
            <person name="Fedorova N."/>
            <person name="Forberger H.A."/>
            <person name="Tran B."/>
            <person name="Kathariou S."/>
            <person name="Wonderling L.D."/>
            <person name="Uhlich G.A."/>
            <person name="Bayles D.O."/>
            <person name="Luchansky J.B."/>
            <person name="Fraser C.M."/>
        </authorList>
    </citation>
    <scope>NUCLEOTIDE SEQUENCE [LARGE SCALE GENOMIC DNA]</scope>
    <source>
        <strain>F2365</strain>
    </source>
</reference>